<dbReference type="EMBL" id="CP000851">
    <property type="protein sequence ID" value="ABV87761.1"/>
    <property type="molecule type" value="Genomic_DNA"/>
</dbReference>
<dbReference type="RefSeq" id="WP_012155673.1">
    <property type="nucleotide sequence ID" value="NC_009901.1"/>
</dbReference>
<dbReference type="STRING" id="398579.Spea_2441"/>
<dbReference type="KEGG" id="spl:Spea_2441"/>
<dbReference type="eggNOG" id="COG2983">
    <property type="taxonomic scope" value="Bacteria"/>
</dbReference>
<dbReference type="HOGENOM" id="CLU_109769_0_1_6"/>
<dbReference type="OrthoDB" id="9786855at2"/>
<dbReference type="Proteomes" id="UP000002608">
    <property type="component" value="Chromosome"/>
</dbReference>
<dbReference type="HAMAP" id="MF_00676">
    <property type="entry name" value="UPF0260"/>
    <property type="match status" value="1"/>
</dbReference>
<dbReference type="InterPro" id="IPR005358">
    <property type="entry name" value="Puta_zinc/iron-chelating_dom"/>
</dbReference>
<dbReference type="InterPro" id="IPR008228">
    <property type="entry name" value="UCP006173"/>
</dbReference>
<dbReference type="NCBIfam" id="NF003500">
    <property type="entry name" value="PRK05170.1-4"/>
    <property type="match status" value="1"/>
</dbReference>
<dbReference type="NCBIfam" id="NF003501">
    <property type="entry name" value="PRK05170.1-5"/>
    <property type="match status" value="1"/>
</dbReference>
<dbReference type="NCBIfam" id="NF003507">
    <property type="entry name" value="PRK05170.2-5"/>
    <property type="match status" value="1"/>
</dbReference>
<dbReference type="PANTHER" id="PTHR37421">
    <property type="entry name" value="UPF0260 PROTEIN YCGN"/>
    <property type="match status" value="1"/>
</dbReference>
<dbReference type="PANTHER" id="PTHR37421:SF1">
    <property type="entry name" value="UPF0260 PROTEIN YCGN"/>
    <property type="match status" value="1"/>
</dbReference>
<dbReference type="Pfam" id="PF03692">
    <property type="entry name" value="CxxCxxCC"/>
    <property type="match status" value="1"/>
</dbReference>
<dbReference type="PIRSF" id="PIRSF006173">
    <property type="entry name" value="UCP006173"/>
    <property type="match status" value="1"/>
</dbReference>
<sequence>MAFWDEKTLAQMNTEEWESLCDGCGKCCLNKLIDDETEELYYTNAACQLLDNKAGHCKSYEQRFNFVPSCTKVTVDNLESLTWLPDSCAYRRLLQGRELPSWHPLRTGSKEAMILAGMSVAGKVTCETKIRDIEDHIVLWPMKDVE</sequence>
<gene>
    <name type="ordered locus">Spea_2441</name>
</gene>
<accession>A8H5C4</accession>
<comment type="similarity">
    <text evidence="1">Belongs to the UPF0260 family.</text>
</comment>
<proteinExistence type="inferred from homology"/>
<organism>
    <name type="scientific">Shewanella pealeana (strain ATCC 700345 / ANG-SQ1)</name>
    <dbReference type="NCBI Taxonomy" id="398579"/>
    <lineage>
        <taxon>Bacteria</taxon>
        <taxon>Pseudomonadati</taxon>
        <taxon>Pseudomonadota</taxon>
        <taxon>Gammaproteobacteria</taxon>
        <taxon>Alteromonadales</taxon>
        <taxon>Shewanellaceae</taxon>
        <taxon>Shewanella</taxon>
    </lineage>
</organism>
<keyword id="KW-1185">Reference proteome</keyword>
<evidence type="ECO:0000255" key="1">
    <source>
        <dbReference type="HAMAP-Rule" id="MF_00676"/>
    </source>
</evidence>
<reference key="1">
    <citation type="submission" date="2007-10" db="EMBL/GenBank/DDBJ databases">
        <title>Complete sequence of Shewanella pealeana ATCC 700345.</title>
        <authorList>
            <consortium name="US DOE Joint Genome Institute"/>
            <person name="Copeland A."/>
            <person name="Lucas S."/>
            <person name="Lapidus A."/>
            <person name="Barry K."/>
            <person name="Glavina del Rio T."/>
            <person name="Dalin E."/>
            <person name="Tice H."/>
            <person name="Pitluck S."/>
            <person name="Chertkov O."/>
            <person name="Brettin T."/>
            <person name="Bruce D."/>
            <person name="Detter J.C."/>
            <person name="Han C."/>
            <person name="Schmutz J."/>
            <person name="Larimer F."/>
            <person name="Land M."/>
            <person name="Hauser L."/>
            <person name="Kyrpides N."/>
            <person name="Kim E."/>
            <person name="Zhao J.-S.Z."/>
            <person name="Manno D."/>
            <person name="Hawari J."/>
            <person name="Richardson P."/>
        </authorList>
    </citation>
    <scope>NUCLEOTIDE SEQUENCE [LARGE SCALE GENOMIC DNA]</scope>
    <source>
        <strain>ATCC 700345 / ANG-SQ1</strain>
    </source>
</reference>
<name>Y2441_SHEPA</name>
<protein>
    <recommendedName>
        <fullName evidence="1">UPF0260 protein Spea_2441</fullName>
    </recommendedName>
</protein>
<feature type="chain" id="PRO_1000082976" description="UPF0260 protein Spea_2441">
    <location>
        <begin position="1"/>
        <end position="146"/>
    </location>
</feature>